<organism>
    <name type="scientific">Nephroselmis olivacea</name>
    <name type="common">Green alga</name>
    <dbReference type="NCBI Taxonomy" id="31312"/>
    <lineage>
        <taxon>Eukaryota</taxon>
        <taxon>Viridiplantae</taxon>
        <taxon>Chlorophyta</taxon>
        <taxon>Nephroselmidophyceae</taxon>
        <taxon>Nephroselmidales</taxon>
        <taxon>Nephroselmidaceae</taxon>
        <taxon>Nephroselmis</taxon>
    </lineage>
</organism>
<gene>
    <name evidence="1" type="primary">rps14</name>
</gene>
<name>RR14_NEPOL</name>
<sequence>MAKKSMIERESKRAALVAKYATRRQALKAAIQKTKSFDERLVLQHQLQDLPVNSVPCRLHNRCTITGRPKGYYRDFGLSRHELRAMAHGCLLPGVTKASW</sequence>
<reference key="1">
    <citation type="journal article" date="1999" name="Proc. Natl. Acad. Sci. U.S.A.">
        <title>The complete chloroplast DNA sequence of the green alga Nephroselmis olivacea: insights into the architecture of ancestral chloroplast genomes.</title>
        <authorList>
            <person name="Turmel M."/>
            <person name="Otis C."/>
            <person name="Lemieux C."/>
        </authorList>
    </citation>
    <scope>NUCLEOTIDE SEQUENCE [LARGE SCALE GENOMIC DNA]</scope>
    <source>
        <strain>NIES-484 / S-N-5-8</strain>
    </source>
</reference>
<geneLocation type="chloroplast"/>
<accession>Q9TL38</accession>
<dbReference type="EMBL" id="AF137379">
    <property type="protein sequence ID" value="AAD54778.1"/>
    <property type="molecule type" value="Genomic_DNA"/>
</dbReference>
<dbReference type="RefSeq" id="NP_050807.1">
    <property type="nucleotide sequence ID" value="NC_000927.1"/>
</dbReference>
<dbReference type="SMR" id="Q9TL38"/>
<dbReference type="GeneID" id="801961"/>
<dbReference type="GO" id="GO:0009507">
    <property type="term" value="C:chloroplast"/>
    <property type="evidence" value="ECO:0007669"/>
    <property type="project" value="UniProtKB-SubCell"/>
</dbReference>
<dbReference type="GO" id="GO:0015935">
    <property type="term" value="C:small ribosomal subunit"/>
    <property type="evidence" value="ECO:0007669"/>
    <property type="project" value="TreeGrafter"/>
</dbReference>
<dbReference type="GO" id="GO:0019843">
    <property type="term" value="F:rRNA binding"/>
    <property type="evidence" value="ECO:0007669"/>
    <property type="project" value="UniProtKB-UniRule"/>
</dbReference>
<dbReference type="GO" id="GO:0003735">
    <property type="term" value="F:structural constituent of ribosome"/>
    <property type="evidence" value="ECO:0007669"/>
    <property type="project" value="InterPro"/>
</dbReference>
<dbReference type="GO" id="GO:0006412">
    <property type="term" value="P:translation"/>
    <property type="evidence" value="ECO:0007669"/>
    <property type="project" value="UniProtKB-UniRule"/>
</dbReference>
<dbReference type="FunFam" id="1.10.287.1480:FF:000001">
    <property type="entry name" value="30S ribosomal protein S14"/>
    <property type="match status" value="1"/>
</dbReference>
<dbReference type="Gene3D" id="1.10.287.1480">
    <property type="match status" value="1"/>
</dbReference>
<dbReference type="HAMAP" id="MF_00537">
    <property type="entry name" value="Ribosomal_uS14_1"/>
    <property type="match status" value="1"/>
</dbReference>
<dbReference type="InterPro" id="IPR001209">
    <property type="entry name" value="Ribosomal_uS14"/>
</dbReference>
<dbReference type="InterPro" id="IPR023036">
    <property type="entry name" value="Ribosomal_uS14_bac/plastid"/>
</dbReference>
<dbReference type="InterPro" id="IPR018271">
    <property type="entry name" value="Ribosomal_uS14_CS"/>
</dbReference>
<dbReference type="NCBIfam" id="NF006477">
    <property type="entry name" value="PRK08881.1"/>
    <property type="match status" value="1"/>
</dbReference>
<dbReference type="PANTHER" id="PTHR19836">
    <property type="entry name" value="30S RIBOSOMAL PROTEIN S14"/>
    <property type="match status" value="1"/>
</dbReference>
<dbReference type="PANTHER" id="PTHR19836:SF19">
    <property type="entry name" value="SMALL RIBOSOMAL SUBUNIT PROTEIN US14M"/>
    <property type="match status" value="1"/>
</dbReference>
<dbReference type="Pfam" id="PF00253">
    <property type="entry name" value="Ribosomal_S14"/>
    <property type="match status" value="1"/>
</dbReference>
<dbReference type="SUPFAM" id="SSF57716">
    <property type="entry name" value="Glucocorticoid receptor-like (DNA-binding domain)"/>
    <property type="match status" value="1"/>
</dbReference>
<dbReference type="PROSITE" id="PS00527">
    <property type="entry name" value="RIBOSOMAL_S14"/>
    <property type="match status" value="1"/>
</dbReference>
<feature type="chain" id="PRO_0000130978" description="Small ribosomal subunit protein uS14c">
    <location>
        <begin position="1"/>
        <end position="100"/>
    </location>
</feature>
<proteinExistence type="inferred from homology"/>
<comment type="function">
    <text evidence="1">Binds 16S rRNA, required for the assembly of 30S particles.</text>
</comment>
<comment type="subunit">
    <text evidence="1">Part of the 30S ribosomal subunit.</text>
</comment>
<comment type="subcellular location">
    <subcellularLocation>
        <location>Plastid</location>
        <location>Chloroplast</location>
    </subcellularLocation>
</comment>
<comment type="similarity">
    <text evidence="1">Belongs to the universal ribosomal protein uS14 family.</text>
</comment>
<protein>
    <recommendedName>
        <fullName evidence="1">Small ribosomal subunit protein uS14c</fullName>
    </recommendedName>
    <alternativeName>
        <fullName evidence="2">30S ribosomal protein S14, chloroplastic</fullName>
    </alternativeName>
</protein>
<evidence type="ECO:0000255" key="1">
    <source>
        <dbReference type="HAMAP-Rule" id="MF_00537"/>
    </source>
</evidence>
<evidence type="ECO:0000305" key="2"/>
<keyword id="KW-0150">Chloroplast</keyword>
<keyword id="KW-0934">Plastid</keyword>
<keyword id="KW-0687">Ribonucleoprotein</keyword>
<keyword id="KW-0689">Ribosomal protein</keyword>
<keyword id="KW-0694">RNA-binding</keyword>
<keyword id="KW-0699">rRNA-binding</keyword>